<feature type="chain" id="PRO_0000187451" description="Large ribosomal subunit protein bL34">
    <location>
        <begin position="1"/>
        <end position="44"/>
    </location>
</feature>
<sequence length="44" mass="5188">MKRTFQPSNLVRKRRHGFRARMITATGRAILKKRRAKGRHKLSA</sequence>
<evidence type="ECO:0000305" key="1"/>
<name>RL34_RICPR</name>
<organism>
    <name type="scientific">Rickettsia prowazekii (strain Madrid E)</name>
    <dbReference type="NCBI Taxonomy" id="272947"/>
    <lineage>
        <taxon>Bacteria</taxon>
        <taxon>Pseudomonadati</taxon>
        <taxon>Pseudomonadota</taxon>
        <taxon>Alphaproteobacteria</taxon>
        <taxon>Rickettsiales</taxon>
        <taxon>Rickettsiaceae</taxon>
        <taxon>Rickettsieae</taxon>
        <taxon>Rickettsia</taxon>
        <taxon>typhus group</taxon>
    </lineage>
</organism>
<comment type="similarity">
    <text evidence="1">Belongs to the bacterial ribosomal protein bL34 family.</text>
</comment>
<protein>
    <recommendedName>
        <fullName evidence="1">Large ribosomal subunit protein bL34</fullName>
    </recommendedName>
    <alternativeName>
        <fullName>50S ribosomal protein L34</fullName>
    </alternativeName>
</protein>
<reference key="1">
    <citation type="journal article" date="1998" name="Nature">
        <title>The genome sequence of Rickettsia prowazekii and the origin of mitochondria.</title>
        <authorList>
            <person name="Andersson S.G.E."/>
            <person name="Zomorodipour A."/>
            <person name="Andersson J.O."/>
            <person name="Sicheritz-Ponten T."/>
            <person name="Alsmark U.C.M."/>
            <person name="Podowski R.M."/>
            <person name="Naeslund A.K."/>
            <person name="Eriksson A.-S."/>
            <person name="Winkler H.H."/>
            <person name="Kurland C.G."/>
        </authorList>
    </citation>
    <scope>NUCLEOTIDE SEQUENCE [LARGE SCALE GENOMIC DNA]</scope>
    <source>
        <strain>Madrid E</strain>
    </source>
</reference>
<accession>Q9ZCU9</accession>
<keyword id="KW-1185">Reference proteome</keyword>
<keyword id="KW-0687">Ribonucleoprotein</keyword>
<keyword id="KW-0689">Ribosomal protein</keyword>
<proteinExistence type="inferred from homology"/>
<dbReference type="EMBL" id="AJ235272">
    <property type="protein sequence ID" value="CAA15054.1"/>
    <property type="molecule type" value="Genomic_DNA"/>
</dbReference>
<dbReference type="PIR" id="D71666">
    <property type="entry name" value="D71666"/>
</dbReference>
<dbReference type="RefSeq" id="NP_220978.1">
    <property type="nucleotide sequence ID" value="NC_000963.1"/>
</dbReference>
<dbReference type="RefSeq" id="WP_004597961.1">
    <property type="nucleotide sequence ID" value="NC_000963.1"/>
</dbReference>
<dbReference type="SMR" id="Q9ZCU9"/>
<dbReference type="STRING" id="272947.gene:17555689"/>
<dbReference type="EnsemblBacteria" id="CAA15054">
    <property type="protein sequence ID" value="CAA15054"/>
    <property type="gene ID" value="CAA15054"/>
</dbReference>
<dbReference type="GeneID" id="57569735"/>
<dbReference type="KEGG" id="rpr:RP610"/>
<dbReference type="PATRIC" id="fig|272947.5.peg.629"/>
<dbReference type="eggNOG" id="COG0230">
    <property type="taxonomic scope" value="Bacteria"/>
</dbReference>
<dbReference type="HOGENOM" id="CLU_129938_2_0_5"/>
<dbReference type="OrthoDB" id="9804164at2"/>
<dbReference type="Proteomes" id="UP000002480">
    <property type="component" value="Chromosome"/>
</dbReference>
<dbReference type="GO" id="GO:1990904">
    <property type="term" value="C:ribonucleoprotein complex"/>
    <property type="evidence" value="ECO:0007669"/>
    <property type="project" value="UniProtKB-KW"/>
</dbReference>
<dbReference type="GO" id="GO:0005840">
    <property type="term" value="C:ribosome"/>
    <property type="evidence" value="ECO:0007669"/>
    <property type="project" value="UniProtKB-KW"/>
</dbReference>
<dbReference type="GO" id="GO:0003735">
    <property type="term" value="F:structural constituent of ribosome"/>
    <property type="evidence" value="ECO:0007669"/>
    <property type="project" value="InterPro"/>
</dbReference>
<dbReference type="GO" id="GO:0006412">
    <property type="term" value="P:translation"/>
    <property type="evidence" value="ECO:0007669"/>
    <property type="project" value="UniProtKB-UniRule"/>
</dbReference>
<dbReference type="FunFam" id="1.10.287.3980:FF:000001">
    <property type="entry name" value="Mitochondrial ribosomal protein L34"/>
    <property type="match status" value="1"/>
</dbReference>
<dbReference type="Gene3D" id="1.10.287.3980">
    <property type="match status" value="1"/>
</dbReference>
<dbReference type="HAMAP" id="MF_00391">
    <property type="entry name" value="Ribosomal_bL34"/>
    <property type="match status" value="1"/>
</dbReference>
<dbReference type="InterPro" id="IPR000271">
    <property type="entry name" value="Ribosomal_bL34"/>
</dbReference>
<dbReference type="InterPro" id="IPR020939">
    <property type="entry name" value="Ribosomal_bL34_CS"/>
</dbReference>
<dbReference type="NCBIfam" id="TIGR01030">
    <property type="entry name" value="rpmH_bact"/>
    <property type="match status" value="1"/>
</dbReference>
<dbReference type="PANTHER" id="PTHR14503:SF4">
    <property type="entry name" value="LARGE RIBOSOMAL SUBUNIT PROTEIN BL34M"/>
    <property type="match status" value="1"/>
</dbReference>
<dbReference type="PANTHER" id="PTHR14503">
    <property type="entry name" value="MITOCHONDRIAL RIBOSOMAL PROTEIN 34 FAMILY MEMBER"/>
    <property type="match status" value="1"/>
</dbReference>
<dbReference type="Pfam" id="PF00468">
    <property type="entry name" value="Ribosomal_L34"/>
    <property type="match status" value="1"/>
</dbReference>
<dbReference type="PROSITE" id="PS00784">
    <property type="entry name" value="RIBOSOMAL_L34"/>
    <property type="match status" value="1"/>
</dbReference>
<gene>
    <name type="primary">rpmH</name>
    <name type="ordered locus">RP610</name>
</gene>